<keyword id="KW-1185">Reference proteome</keyword>
<keyword id="KW-0687">Ribonucleoprotein</keyword>
<keyword id="KW-0689">Ribosomal protein</keyword>
<keyword id="KW-0694">RNA-binding</keyword>
<keyword id="KW-0699">rRNA-binding</keyword>
<dbReference type="EMBL" id="AP009389">
    <property type="protein sequence ID" value="BAF59050.1"/>
    <property type="molecule type" value="Genomic_DNA"/>
</dbReference>
<dbReference type="SMR" id="A5D3X2"/>
<dbReference type="STRING" id="370438.PTH_0869"/>
<dbReference type="KEGG" id="pth:PTH_0869"/>
<dbReference type="eggNOG" id="COG0268">
    <property type="taxonomic scope" value="Bacteria"/>
</dbReference>
<dbReference type="HOGENOM" id="CLU_160655_0_1_9"/>
<dbReference type="Proteomes" id="UP000006556">
    <property type="component" value="Chromosome"/>
</dbReference>
<dbReference type="GO" id="GO:0005829">
    <property type="term" value="C:cytosol"/>
    <property type="evidence" value="ECO:0007669"/>
    <property type="project" value="TreeGrafter"/>
</dbReference>
<dbReference type="GO" id="GO:0015935">
    <property type="term" value="C:small ribosomal subunit"/>
    <property type="evidence" value="ECO:0007669"/>
    <property type="project" value="TreeGrafter"/>
</dbReference>
<dbReference type="GO" id="GO:0070181">
    <property type="term" value="F:small ribosomal subunit rRNA binding"/>
    <property type="evidence" value="ECO:0007669"/>
    <property type="project" value="TreeGrafter"/>
</dbReference>
<dbReference type="GO" id="GO:0003735">
    <property type="term" value="F:structural constituent of ribosome"/>
    <property type="evidence" value="ECO:0007669"/>
    <property type="project" value="InterPro"/>
</dbReference>
<dbReference type="GO" id="GO:0006412">
    <property type="term" value="P:translation"/>
    <property type="evidence" value="ECO:0007669"/>
    <property type="project" value="UniProtKB-UniRule"/>
</dbReference>
<dbReference type="FunFam" id="1.20.58.110:FF:000001">
    <property type="entry name" value="30S ribosomal protein S20"/>
    <property type="match status" value="1"/>
</dbReference>
<dbReference type="Gene3D" id="1.20.58.110">
    <property type="entry name" value="Ribosomal protein S20"/>
    <property type="match status" value="1"/>
</dbReference>
<dbReference type="HAMAP" id="MF_00500">
    <property type="entry name" value="Ribosomal_bS20"/>
    <property type="match status" value="1"/>
</dbReference>
<dbReference type="InterPro" id="IPR002583">
    <property type="entry name" value="Ribosomal_bS20"/>
</dbReference>
<dbReference type="InterPro" id="IPR036510">
    <property type="entry name" value="Ribosomal_bS20_sf"/>
</dbReference>
<dbReference type="NCBIfam" id="TIGR00029">
    <property type="entry name" value="S20"/>
    <property type="match status" value="1"/>
</dbReference>
<dbReference type="PANTHER" id="PTHR33398">
    <property type="entry name" value="30S RIBOSOMAL PROTEIN S20"/>
    <property type="match status" value="1"/>
</dbReference>
<dbReference type="PANTHER" id="PTHR33398:SF1">
    <property type="entry name" value="SMALL RIBOSOMAL SUBUNIT PROTEIN BS20C"/>
    <property type="match status" value="1"/>
</dbReference>
<dbReference type="Pfam" id="PF01649">
    <property type="entry name" value="Ribosomal_S20p"/>
    <property type="match status" value="1"/>
</dbReference>
<dbReference type="SUPFAM" id="SSF46992">
    <property type="entry name" value="Ribosomal protein S20"/>
    <property type="match status" value="1"/>
</dbReference>
<proteinExistence type="inferred from homology"/>
<feature type="chain" id="PRO_1000081439" description="Small ribosomal subunit protein bS20">
    <location>
        <begin position="1"/>
        <end position="88"/>
    </location>
</feature>
<feature type="region of interest" description="Disordered" evidence="2">
    <location>
        <begin position="69"/>
        <end position="88"/>
    </location>
</feature>
<feature type="compositionally biased region" description="Basic residues" evidence="2">
    <location>
        <begin position="71"/>
        <end position="88"/>
    </location>
</feature>
<protein>
    <recommendedName>
        <fullName evidence="1">Small ribosomal subunit protein bS20</fullName>
    </recommendedName>
    <alternativeName>
        <fullName evidence="3">30S ribosomal protein S20</fullName>
    </alternativeName>
</protein>
<gene>
    <name evidence="1" type="primary">rpsT</name>
    <name type="ordered locus">PTH_0869</name>
</gene>
<accession>A5D3X2</accession>
<organism>
    <name type="scientific">Pelotomaculum thermopropionicum (strain DSM 13744 / JCM 10971 / SI)</name>
    <dbReference type="NCBI Taxonomy" id="370438"/>
    <lineage>
        <taxon>Bacteria</taxon>
        <taxon>Bacillati</taxon>
        <taxon>Bacillota</taxon>
        <taxon>Clostridia</taxon>
        <taxon>Eubacteriales</taxon>
        <taxon>Desulfotomaculaceae</taxon>
        <taxon>Pelotomaculum</taxon>
    </lineage>
</organism>
<evidence type="ECO:0000255" key="1">
    <source>
        <dbReference type="HAMAP-Rule" id="MF_00500"/>
    </source>
</evidence>
<evidence type="ECO:0000256" key="2">
    <source>
        <dbReference type="SAM" id="MobiDB-lite"/>
    </source>
</evidence>
<evidence type="ECO:0000305" key="3"/>
<sequence>MPNIKSAAKRVEVTRKRTMRNTRIKSALKTTIRKFEEALKNASHDEARLKLRNAIRAIDKAVTKGVLHKNTASRKKSRLTKRFNKLTG</sequence>
<reference key="1">
    <citation type="journal article" date="2008" name="Genome Res.">
        <title>The genome of Pelotomaculum thermopropionicum reveals niche-associated evolution in anaerobic microbiota.</title>
        <authorList>
            <person name="Kosaka T."/>
            <person name="Kato S."/>
            <person name="Shimoyama T."/>
            <person name="Ishii S."/>
            <person name="Abe T."/>
            <person name="Watanabe K."/>
        </authorList>
    </citation>
    <scope>NUCLEOTIDE SEQUENCE [LARGE SCALE GENOMIC DNA]</scope>
    <source>
        <strain>DSM 13744 / JCM 10971 / SI</strain>
    </source>
</reference>
<name>RS20_PELTS</name>
<comment type="function">
    <text evidence="1">Binds directly to 16S ribosomal RNA.</text>
</comment>
<comment type="similarity">
    <text evidence="1">Belongs to the bacterial ribosomal protein bS20 family.</text>
</comment>